<evidence type="ECO:0000256" key="1">
    <source>
        <dbReference type="SAM" id="MobiDB-lite"/>
    </source>
</evidence>
<evidence type="ECO:0000305" key="2"/>
<sequence>MEETSVAGDPGPDAGTSTAPNAAPEPVARRQRILFVGEAATLAHVVRPFVLARSLDPSRYEVHFACDPRFNKLLGPLPFPHHPIHTVPSEEVLLKIAQGRLFYNTRTLRKYIAADRKILNEIAPDVVVGDNRLSLSVSARLAGIPYIAIANAYWSPQARRRFPLPDVPWTRFFGVRPVSILYRLYRPLIFALYCLPLNWLRRKHGLSSLGWDLCRIFTDGDYTLYADVPELVPTYNLPANHRYLGPVLWSPDVKPPTWWHSLPTDRPIIYATLGSSGGKNLLQVVLNALGRFTRDGDRGHRWPEPPEERAGQRLRRGLPAGRSGCSALRRGALQRRQPDDAAGVGGRGAGDRAPQQHGPALEHGGP</sequence>
<gene>
    <name type="ordered locus">BCG_2979c</name>
</gene>
<proteinExistence type="inferred from homology"/>
<organism>
    <name type="scientific">Mycobacterium bovis (strain BCG / Pasteur 1173P2)</name>
    <dbReference type="NCBI Taxonomy" id="410289"/>
    <lineage>
        <taxon>Bacteria</taxon>
        <taxon>Bacillati</taxon>
        <taxon>Actinomycetota</taxon>
        <taxon>Actinomycetes</taxon>
        <taxon>Mycobacteriales</taxon>
        <taxon>Mycobacteriaceae</taxon>
        <taxon>Mycobacterium</taxon>
        <taxon>Mycobacterium tuberculosis complex</taxon>
    </lineage>
</organism>
<dbReference type="EMBL" id="AM408590">
    <property type="protein sequence ID" value="CAL72968.1"/>
    <property type="molecule type" value="Genomic_DNA"/>
</dbReference>
<dbReference type="CAZy" id="GT1">
    <property type="family name" value="Glycosyltransferase Family 1"/>
</dbReference>
<dbReference type="KEGG" id="mbb:BCG_2979c"/>
<dbReference type="HOGENOM" id="CLU_064476_0_0_11"/>
<dbReference type="Proteomes" id="UP000001472">
    <property type="component" value="Chromosome"/>
</dbReference>
<dbReference type="Gene3D" id="3.40.50.2000">
    <property type="entry name" value="Glycogen Phosphorylase B"/>
    <property type="match status" value="1"/>
</dbReference>
<dbReference type="SUPFAM" id="SSF53756">
    <property type="entry name" value="UDP-Glycosyltransferase/glycogen phosphorylase"/>
    <property type="match status" value="1"/>
</dbReference>
<name>GLTR2_MYCBP</name>
<accession>A1KMV2</accession>
<feature type="chain" id="PRO_0000314435" description="Inactive PGL/p-HBAD biosynthesis glycosyltransferase BCG_2979c">
    <location>
        <begin position="1"/>
        <end position="366"/>
    </location>
</feature>
<feature type="region of interest" description="Disordered" evidence="1">
    <location>
        <begin position="1"/>
        <end position="23"/>
    </location>
</feature>
<feature type="region of interest" description="Disordered" evidence="1">
    <location>
        <begin position="295"/>
        <end position="366"/>
    </location>
</feature>
<feature type="compositionally biased region" description="Basic and acidic residues" evidence="1">
    <location>
        <begin position="295"/>
        <end position="311"/>
    </location>
</feature>
<comment type="similarity">
    <text evidence="2">Belongs to the UDP-glycosyltransferase family.</text>
</comment>
<comment type="caution">
    <text evidence="2">This sequence is shorter than orthologs and has a completely different amino acid sequence after position 289 due to a single nucleotide insertion. This protein is not functional which could partially explain the failure of M.bovis derivatives to produce the full-length PGL.</text>
</comment>
<reference key="1">
    <citation type="journal article" date="2007" name="Proc. Natl. Acad. Sci. U.S.A.">
        <title>Genome plasticity of BCG and impact on vaccine efficacy.</title>
        <authorList>
            <person name="Brosch R."/>
            <person name="Gordon S.V."/>
            <person name="Garnier T."/>
            <person name="Eiglmeier K."/>
            <person name="Frigui W."/>
            <person name="Valenti P."/>
            <person name="Dos Santos S."/>
            <person name="Duthoy S."/>
            <person name="Lacroix C."/>
            <person name="Garcia-Pelayo C."/>
            <person name="Inwald J.K."/>
            <person name="Golby P."/>
            <person name="Garcia J.N."/>
            <person name="Hewinson R.G."/>
            <person name="Behr M.A."/>
            <person name="Quail M.A."/>
            <person name="Churcher C."/>
            <person name="Barrell B.G."/>
            <person name="Parkhill J."/>
            <person name="Cole S.T."/>
        </authorList>
    </citation>
    <scope>NUCLEOTIDE SEQUENCE [LARGE SCALE GENOMIC DNA]</scope>
    <source>
        <strain>BCG / Pasteur 1173P2</strain>
    </source>
</reference>
<reference key="2">
    <citation type="journal article" date="2004" name="J. Biol. Chem.">
        <title>Characterization of three glycosyltransferases involved in the biosynthesis of the phenolic glycolipid antigens from the Mycobacterium tuberculosis complex.</title>
        <authorList>
            <person name="Perez E."/>
            <person name="Constant P."/>
            <person name="Lemassu A."/>
            <person name="Laval F."/>
            <person name="Daffe M."/>
            <person name="Guilhot C."/>
        </authorList>
    </citation>
    <scope>LACK OF ACTIVITY</scope>
</reference>
<protein>
    <recommendedName>
        <fullName>Inactive PGL/p-HBAD biosynthesis glycosyltransferase BCG_2979c</fullName>
    </recommendedName>
</protein>